<feature type="transit peptide" description="Mitochondrion" evidence="2">
    <location>
        <begin position="1"/>
        <end position="50"/>
    </location>
</feature>
<feature type="chain" id="PRO_0000449810" description="ATPase GET3C">
    <location>
        <begin position="51"/>
        <end position="391"/>
    </location>
</feature>
<feature type="active site" evidence="3">
    <location>
        <position position="106"/>
    </location>
</feature>
<feature type="binding site" evidence="3">
    <location>
        <begin position="77"/>
        <end position="84"/>
    </location>
    <ligand>
        <name>ATP</name>
        <dbReference type="ChEBI" id="CHEBI:30616"/>
    </ligand>
</feature>
<feature type="binding site" evidence="3">
    <location>
        <position position="328"/>
    </location>
    <ligand>
        <name>ATP</name>
        <dbReference type="ChEBI" id="CHEBI:30616"/>
    </ligand>
</feature>
<gene>
    <name evidence="5" type="primary">GET3C</name>
    <name evidence="7" type="ordered locus">At5g60730</name>
    <name evidence="8" type="ORF">MUP24.15</name>
</gene>
<organism>
    <name type="scientific">Arabidopsis thaliana</name>
    <name type="common">Mouse-ear cress</name>
    <dbReference type="NCBI Taxonomy" id="3702"/>
    <lineage>
        <taxon>Eukaryota</taxon>
        <taxon>Viridiplantae</taxon>
        <taxon>Streptophyta</taxon>
        <taxon>Embryophyta</taxon>
        <taxon>Tracheophyta</taxon>
        <taxon>Spermatophyta</taxon>
        <taxon>Magnoliopsida</taxon>
        <taxon>eudicotyledons</taxon>
        <taxon>Gunneridae</taxon>
        <taxon>Pentapetalae</taxon>
        <taxon>rosids</taxon>
        <taxon>malvids</taxon>
        <taxon>Brassicales</taxon>
        <taxon>Brassicaceae</taxon>
        <taxon>Camelineae</taxon>
        <taxon>Arabidopsis</taxon>
    </lineage>
</organism>
<name>GET3C_ARATH</name>
<proteinExistence type="evidence at transcript level"/>
<accession>Q5XF80</accession>
<accession>Q9FF47</accession>
<reference key="1">
    <citation type="journal article" date="1997" name="DNA Res.">
        <title>Structural analysis of Arabidopsis thaliana chromosome 5. I. Sequence features of the 1.6 Mb regions covered by twenty physically assigned P1 clones.</title>
        <authorList>
            <person name="Sato S."/>
            <person name="Kotani H."/>
            <person name="Nakamura Y."/>
            <person name="Kaneko T."/>
            <person name="Asamizu E."/>
            <person name="Fukami M."/>
            <person name="Miyajima N."/>
            <person name="Tabata S."/>
        </authorList>
    </citation>
    <scope>NUCLEOTIDE SEQUENCE [LARGE SCALE GENOMIC DNA]</scope>
    <source>
        <strain>cv. Columbia</strain>
    </source>
</reference>
<reference key="2">
    <citation type="journal article" date="2017" name="Plant J.">
        <title>Araport11: a complete reannotation of the Arabidopsis thaliana reference genome.</title>
        <authorList>
            <person name="Cheng C.Y."/>
            <person name="Krishnakumar V."/>
            <person name="Chan A.P."/>
            <person name="Thibaud-Nissen F."/>
            <person name="Schobel S."/>
            <person name="Town C.D."/>
        </authorList>
    </citation>
    <scope>GENOME REANNOTATION</scope>
    <source>
        <strain>cv. Columbia</strain>
    </source>
</reference>
<reference key="3">
    <citation type="submission" date="2004-11" db="EMBL/GenBank/DDBJ databases">
        <title>Aradidopsis ORF clones.</title>
        <authorList>
            <person name="Shinn P."/>
            <person name="Chen H."/>
            <person name="Cheuk R.F."/>
            <person name="Kim C.J."/>
            <person name="Ecker J.R."/>
        </authorList>
    </citation>
    <scope>NUCLEOTIDE SEQUENCE [LARGE SCALE MRNA]</scope>
    <source>
        <strain>cv. Columbia</strain>
    </source>
</reference>
<reference key="4">
    <citation type="journal article" date="2017" name="Proc. Natl. Acad. Sci. U.S.A.">
        <title>Loss of GET pathway orthologs in Arabidopsis thaliana causes root hair growth defects and affects SNARE abundance.</title>
        <authorList>
            <person name="Xing S."/>
            <person name="Mehlhorn D.G."/>
            <person name="Wallmeroth N."/>
            <person name="Asseck L.Y."/>
            <person name="Kar R."/>
            <person name="Voss A."/>
            <person name="Denninger P."/>
            <person name="Schmidt V.A."/>
            <person name="Schwarzlaender M."/>
            <person name="Stierhof Y.D."/>
            <person name="Grossmann G."/>
            <person name="Grefen C."/>
        </authorList>
    </citation>
    <scope>SUBCELLULAR LOCATION</scope>
    <scope>DISRUPTION PHENOTYPE</scope>
</reference>
<dbReference type="EC" id="3.6.-.-" evidence="1"/>
<dbReference type="EMBL" id="AB005246">
    <property type="protein sequence ID" value="BAB09846.1"/>
    <property type="status" value="ALT_SEQ"/>
    <property type="molecule type" value="Genomic_DNA"/>
</dbReference>
<dbReference type="EMBL" id="CP002688">
    <property type="protein sequence ID" value="AED97371.1"/>
    <property type="molecule type" value="Genomic_DNA"/>
</dbReference>
<dbReference type="EMBL" id="BT015736">
    <property type="protein sequence ID" value="AAU84673.1"/>
    <property type="molecule type" value="mRNA"/>
</dbReference>
<dbReference type="EMBL" id="BT020179">
    <property type="protein sequence ID" value="AAV43781.1"/>
    <property type="molecule type" value="mRNA"/>
</dbReference>
<dbReference type="RefSeq" id="NP_200881.2">
    <property type="nucleotide sequence ID" value="NM_125466.4"/>
</dbReference>
<dbReference type="SMR" id="Q5XF80"/>
<dbReference type="FunCoup" id="Q5XF80">
    <property type="interactions" value="49"/>
</dbReference>
<dbReference type="STRING" id="3702.Q5XF80"/>
<dbReference type="iPTMnet" id="Q5XF80"/>
<dbReference type="SwissPalm" id="Q5XF80"/>
<dbReference type="PaxDb" id="3702-AT5G60730.1"/>
<dbReference type="ProteomicsDB" id="191406"/>
<dbReference type="EnsemblPlants" id="AT5G60730.1">
    <property type="protein sequence ID" value="AT5G60730.1"/>
    <property type="gene ID" value="AT5G60730"/>
</dbReference>
<dbReference type="GeneID" id="836194"/>
<dbReference type="Gramene" id="AT5G60730.1">
    <property type="protein sequence ID" value="AT5G60730.1"/>
    <property type="gene ID" value="AT5G60730"/>
</dbReference>
<dbReference type="KEGG" id="ath:AT5G60730"/>
<dbReference type="Araport" id="AT5G60730"/>
<dbReference type="TAIR" id="AT5G60730">
    <property type="gene designation" value="GET3C"/>
</dbReference>
<dbReference type="eggNOG" id="KOG2825">
    <property type="taxonomic scope" value="Eukaryota"/>
</dbReference>
<dbReference type="HOGENOM" id="CLU_040761_2_1_1"/>
<dbReference type="InParanoid" id="Q5XF80"/>
<dbReference type="OMA" id="CHNKARE"/>
<dbReference type="PhylomeDB" id="Q5XF80"/>
<dbReference type="CD-CODE" id="4299E36E">
    <property type="entry name" value="Nucleolus"/>
</dbReference>
<dbReference type="PRO" id="PR:Q5XF80"/>
<dbReference type="Proteomes" id="UP000006548">
    <property type="component" value="Chromosome 5"/>
</dbReference>
<dbReference type="ExpressionAtlas" id="Q5XF80">
    <property type="expression patterns" value="baseline and differential"/>
</dbReference>
<dbReference type="GO" id="GO:0005759">
    <property type="term" value="C:mitochondrial matrix"/>
    <property type="evidence" value="ECO:0000314"/>
    <property type="project" value="TAIR"/>
</dbReference>
<dbReference type="GO" id="GO:0005739">
    <property type="term" value="C:mitochondrion"/>
    <property type="evidence" value="ECO:0007005"/>
    <property type="project" value="TAIR"/>
</dbReference>
<dbReference type="GO" id="GO:0009536">
    <property type="term" value="C:plastid"/>
    <property type="evidence" value="ECO:0007005"/>
    <property type="project" value="TAIR"/>
</dbReference>
<dbReference type="GO" id="GO:0005524">
    <property type="term" value="F:ATP binding"/>
    <property type="evidence" value="ECO:0007669"/>
    <property type="project" value="UniProtKB-KW"/>
</dbReference>
<dbReference type="GO" id="GO:0016887">
    <property type="term" value="F:ATP hydrolysis activity"/>
    <property type="evidence" value="ECO:0007669"/>
    <property type="project" value="InterPro"/>
</dbReference>
<dbReference type="CDD" id="cd02035">
    <property type="entry name" value="ArsA"/>
    <property type="match status" value="1"/>
</dbReference>
<dbReference type="FunFam" id="3.40.50.300:FF:000936">
    <property type="entry name" value="Arsenical pump-driving ATPase"/>
    <property type="match status" value="1"/>
</dbReference>
<dbReference type="Gene3D" id="3.40.50.300">
    <property type="entry name" value="P-loop containing nucleotide triphosphate hydrolases"/>
    <property type="match status" value="1"/>
</dbReference>
<dbReference type="InterPro" id="IPR025723">
    <property type="entry name" value="Anion-transp_ATPase-like_dom"/>
</dbReference>
<dbReference type="InterPro" id="IPR016300">
    <property type="entry name" value="ATPase_ArsA/GET3"/>
</dbReference>
<dbReference type="InterPro" id="IPR027417">
    <property type="entry name" value="P-loop_NTPase"/>
</dbReference>
<dbReference type="NCBIfam" id="TIGR00345">
    <property type="entry name" value="GET3_arsA_TRC40"/>
    <property type="match status" value="1"/>
</dbReference>
<dbReference type="PANTHER" id="PTHR10803">
    <property type="entry name" value="ARSENICAL PUMP-DRIVING ATPASE ARSENITE-TRANSLOCATING ATPASE"/>
    <property type="match status" value="1"/>
</dbReference>
<dbReference type="PANTHER" id="PTHR10803:SF30">
    <property type="entry name" value="ATPASE GET3C"/>
    <property type="match status" value="1"/>
</dbReference>
<dbReference type="Pfam" id="PF02374">
    <property type="entry name" value="ArsA_ATPase"/>
    <property type="match status" value="1"/>
</dbReference>
<dbReference type="SUPFAM" id="SSF52540">
    <property type="entry name" value="P-loop containing nucleoside triphosphate hydrolases"/>
    <property type="match status" value="1"/>
</dbReference>
<protein>
    <recommendedName>
        <fullName evidence="6">ATPase GET3C</fullName>
        <shortName evidence="5">AtGET3C</shortName>
        <ecNumber evidence="1">3.6.-.-</ecNumber>
    </recommendedName>
    <alternativeName>
        <fullName evidence="6">Guided entry of tail-anchored proteins 3 homolog C</fullName>
    </alternativeName>
</protein>
<evidence type="ECO:0000250" key="1">
    <source>
        <dbReference type="UniProtKB" id="Q6DYE4"/>
    </source>
</evidence>
<evidence type="ECO:0000255" key="2"/>
<evidence type="ECO:0000255" key="3">
    <source>
        <dbReference type="HAMAP-Rule" id="MF_03112"/>
    </source>
</evidence>
<evidence type="ECO:0000269" key="4">
    <source>
    </source>
</evidence>
<evidence type="ECO:0000303" key="5">
    <source>
    </source>
</evidence>
<evidence type="ECO:0000305" key="6"/>
<evidence type="ECO:0000312" key="7">
    <source>
        <dbReference type="Araport" id="AT5G60730"/>
    </source>
</evidence>
<evidence type="ECO:0000312" key="8">
    <source>
        <dbReference type="EMBL" id="BAB09846.1"/>
    </source>
</evidence>
<sequence>MAALLLLNRVSRSTSSISLHRVAGTLGFNSFNAQIHGDRISGTLFRVRSLATLAEGASHFNEMVSVNQRKYYLLGGKGGVGKTSCAASLAVKFASHGHPTIVVSTDPAHSLSDSFSQDLSGGVLKPVQGVDSPLLALEITPEIMKDEIKRQTGDKSVKNMMDSMGLGMFAGELGDLNLEDMLNAASPGIDEIAAISKVLQFMEAPEYSRFTRIVFDTAPTGHTLRLLSLPDFYDSSISKITKLKKKITAAASAFKLVFGKKEIQQKELPNELDQLKERMEKVRNVFRDVDTTEFVIVTIPTVMAINESSRLHASLRKENVPVHRLIVNQLLPQSESDCKFCSIRRKEQTRVLGLIQNDTELSGLKLIQSPLLDAEIRGVPALKFMGDLIWK</sequence>
<keyword id="KW-0067">ATP-binding</keyword>
<keyword id="KW-0378">Hydrolase</keyword>
<keyword id="KW-0496">Mitochondrion</keyword>
<keyword id="KW-0547">Nucleotide-binding</keyword>
<keyword id="KW-1185">Reference proteome</keyword>
<keyword id="KW-0809">Transit peptide</keyword>
<comment type="catalytic activity">
    <reaction evidence="1">
        <text>ATP + H2O = ADP + phosphate + H(+)</text>
        <dbReference type="Rhea" id="RHEA:13065"/>
        <dbReference type="ChEBI" id="CHEBI:15377"/>
        <dbReference type="ChEBI" id="CHEBI:15378"/>
        <dbReference type="ChEBI" id="CHEBI:30616"/>
        <dbReference type="ChEBI" id="CHEBI:43474"/>
        <dbReference type="ChEBI" id="CHEBI:456216"/>
    </reaction>
    <physiologicalReaction direction="left-to-right" evidence="1">
        <dbReference type="Rhea" id="RHEA:13066"/>
    </physiologicalReaction>
</comment>
<comment type="subcellular location">
    <subcellularLocation>
        <location evidence="4">Mitochondrion matrix</location>
    </subcellularLocation>
</comment>
<comment type="disruption phenotype">
    <text evidence="4">No visible phenotype under normal growth conditions.</text>
</comment>
<comment type="similarity">
    <text evidence="6">Belongs to the arsA ATPase family.</text>
</comment>
<comment type="sequence caution" evidence="6">
    <conflict type="erroneous gene model prediction">
        <sequence resource="EMBL-CDS" id="BAB09846"/>
    </conflict>
</comment>